<dbReference type="EC" id="6.3.4.5" evidence="1"/>
<dbReference type="EMBL" id="AL935263">
    <property type="protein sequence ID" value="CCC78238.1"/>
    <property type="molecule type" value="Genomic_DNA"/>
</dbReference>
<dbReference type="RefSeq" id="WP_003641033.1">
    <property type="nucleotide sequence ID" value="NC_004567.2"/>
</dbReference>
<dbReference type="RefSeq" id="YP_004888752.1">
    <property type="nucleotide sequence ID" value="NC_004567.2"/>
</dbReference>
<dbReference type="SMR" id="P59603"/>
<dbReference type="STRING" id="220668.lp_0775"/>
<dbReference type="EnsemblBacteria" id="CCC78238">
    <property type="protein sequence ID" value="CCC78238"/>
    <property type="gene ID" value="lp_0775"/>
</dbReference>
<dbReference type="KEGG" id="lpl:lp_0775"/>
<dbReference type="PATRIC" id="fig|220668.9.peg.655"/>
<dbReference type="eggNOG" id="COG0137">
    <property type="taxonomic scope" value="Bacteria"/>
</dbReference>
<dbReference type="HOGENOM" id="CLU_032784_4_2_9"/>
<dbReference type="OrthoDB" id="9801641at2"/>
<dbReference type="PhylomeDB" id="P59603"/>
<dbReference type="UniPathway" id="UPA00068">
    <property type="reaction ID" value="UER00113"/>
</dbReference>
<dbReference type="Proteomes" id="UP000000432">
    <property type="component" value="Chromosome"/>
</dbReference>
<dbReference type="GO" id="GO:0005737">
    <property type="term" value="C:cytoplasm"/>
    <property type="evidence" value="ECO:0007669"/>
    <property type="project" value="UniProtKB-SubCell"/>
</dbReference>
<dbReference type="GO" id="GO:0004055">
    <property type="term" value="F:argininosuccinate synthase activity"/>
    <property type="evidence" value="ECO:0007669"/>
    <property type="project" value="UniProtKB-UniRule"/>
</dbReference>
<dbReference type="GO" id="GO:0005524">
    <property type="term" value="F:ATP binding"/>
    <property type="evidence" value="ECO:0007669"/>
    <property type="project" value="UniProtKB-UniRule"/>
</dbReference>
<dbReference type="GO" id="GO:0000053">
    <property type="term" value="P:argininosuccinate metabolic process"/>
    <property type="evidence" value="ECO:0007669"/>
    <property type="project" value="TreeGrafter"/>
</dbReference>
<dbReference type="GO" id="GO:0006526">
    <property type="term" value="P:L-arginine biosynthetic process"/>
    <property type="evidence" value="ECO:0007669"/>
    <property type="project" value="UniProtKB-UniRule"/>
</dbReference>
<dbReference type="GO" id="GO:0000050">
    <property type="term" value="P:urea cycle"/>
    <property type="evidence" value="ECO:0007669"/>
    <property type="project" value="TreeGrafter"/>
</dbReference>
<dbReference type="CDD" id="cd01999">
    <property type="entry name" value="ASS"/>
    <property type="match status" value="1"/>
</dbReference>
<dbReference type="FunFam" id="1.20.5.470:FF:000002">
    <property type="entry name" value="Argininosuccinate synthase"/>
    <property type="match status" value="1"/>
</dbReference>
<dbReference type="FunFam" id="3.40.50.620:FF:000038">
    <property type="entry name" value="Argininosuccinate synthase"/>
    <property type="match status" value="1"/>
</dbReference>
<dbReference type="FunFam" id="3.90.1260.10:FF:000007">
    <property type="entry name" value="Argininosuccinate synthase"/>
    <property type="match status" value="1"/>
</dbReference>
<dbReference type="Gene3D" id="3.90.1260.10">
    <property type="entry name" value="Argininosuccinate synthetase, chain A, domain 2"/>
    <property type="match status" value="1"/>
</dbReference>
<dbReference type="Gene3D" id="3.40.50.620">
    <property type="entry name" value="HUPs"/>
    <property type="match status" value="1"/>
</dbReference>
<dbReference type="Gene3D" id="1.20.5.470">
    <property type="entry name" value="Single helix bin"/>
    <property type="match status" value="1"/>
</dbReference>
<dbReference type="HAMAP" id="MF_00005">
    <property type="entry name" value="Arg_succ_synth_type1"/>
    <property type="match status" value="1"/>
</dbReference>
<dbReference type="InterPro" id="IPR048268">
    <property type="entry name" value="Arginosuc_syn_C"/>
</dbReference>
<dbReference type="InterPro" id="IPR048267">
    <property type="entry name" value="Arginosuc_syn_N"/>
</dbReference>
<dbReference type="InterPro" id="IPR001518">
    <property type="entry name" value="Arginosuc_synth"/>
</dbReference>
<dbReference type="InterPro" id="IPR018223">
    <property type="entry name" value="Arginosuc_synth_CS"/>
</dbReference>
<dbReference type="InterPro" id="IPR023434">
    <property type="entry name" value="Arginosuc_synth_type_1_subfam"/>
</dbReference>
<dbReference type="InterPro" id="IPR024074">
    <property type="entry name" value="AS_cat/multimer_dom_body"/>
</dbReference>
<dbReference type="InterPro" id="IPR014729">
    <property type="entry name" value="Rossmann-like_a/b/a_fold"/>
</dbReference>
<dbReference type="NCBIfam" id="TIGR00032">
    <property type="entry name" value="argG"/>
    <property type="match status" value="1"/>
</dbReference>
<dbReference type="NCBIfam" id="NF001770">
    <property type="entry name" value="PRK00509.1"/>
    <property type="match status" value="1"/>
</dbReference>
<dbReference type="PANTHER" id="PTHR11587">
    <property type="entry name" value="ARGININOSUCCINATE SYNTHASE"/>
    <property type="match status" value="1"/>
</dbReference>
<dbReference type="PANTHER" id="PTHR11587:SF2">
    <property type="entry name" value="ARGININOSUCCINATE SYNTHASE"/>
    <property type="match status" value="1"/>
</dbReference>
<dbReference type="Pfam" id="PF20979">
    <property type="entry name" value="Arginosuc_syn_C"/>
    <property type="match status" value="1"/>
</dbReference>
<dbReference type="Pfam" id="PF00764">
    <property type="entry name" value="Arginosuc_synth"/>
    <property type="match status" value="1"/>
</dbReference>
<dbReference type="SUPFAM" id="SSF52402">
    <property type="entry name" value="Adenine nucleotide alpha hydrolases-like"/>
    <property type="match status" value="1"/>
</dbReference>
<dbReference type="SUPFAM" id="SSF69864">
    <property type="entry name" value="Argininosuccinate synthetase, C-terminal domain"/>
    <property type="match status" value="1"/>
</dbReference>
<dbReference type="PROSITE" id="PS00564">
    <property type="entry name" value="ARGININOSUCCIN_SYN_1"/>
    <property type="match status" value="1"/>
</dbReference>
<dbReference type="PROSITE" id="PS00565">
    <property type="entry name" value="ARGININOSUCCIN_SYN_2"/>
    <property type="match status" value="1"/>
</dbReference>
<comment type="catalytic activity">
    <reaction evidence="1">
        <text>L-citrulline + L-aspartate + ATP = 2-(N(omega)-L-arginino)succinate + AMP + diphosphate + H(+)</text>
        <dbReference type="Rhea" id="RHEA:10932"/>
        <dbReference type="ChEBI" id="CHEBI:15378"/>
        <dbReference type="ChEBI" id="CHEBI:29991"/>
        <dbReference type="ChEBI" id="CHEBI:30616"/>
        <dbReference type="ChEBI" id="CHEBI:33019"/>
        <dbReference type="ChEBI" id="CHEBI:57472"/>
        <dbReference type="ChEBI" id="CHEBI:57743"/>
        <dbReference type="ChEBI" id="CHEBI:456215"/>
        <dbReference type="EC" id="6.3.4.5"/>
    </reaction>
</comment>
<comment type="pathway">
    <text evidence="1">Amino-acid biosynthesis; L-arginine biosynthesis; L-arginine from L-ornithine and carbamoyl phosphate: step 2/3.</text>
</comment>
<comment type="subunit">
    <text evidence="1">Homotetramer.</text>
</comment>
<comment type="subcellular location">
    <subcellularLocation>
        <location evidence="1">Cytoplasm</location>
    </subcellularLocation>
</comment>
<comment type="similarity">
    <text evidence="1">Belongs to the argininosuccinate synthase family. Type 1 subfamily.</text>
</comment>
<keyword id="KW-0028">Amino-acid biosynthesis</keyword>
<keyword id="KW-0055">Arginine biosynthesis</keyword>
<keyword id="KW-0067">ATP-binding</keyword>
<keyword id="KW-0963">Cytoplasm</keyword>
<keyword id="KW-0436">Ligase</keyword>
<keyword id="KW-0547">Nucleotide-binding</keyword>
<keyword id="KW-1185">Reference proteome</keyword>
<organism>
    <name type="scientific">Lactiplantibacillus plantarum (strain ATCC BAA-793 / NCIMB 8826 / WCFS1)</name>
    <name type="common">Lactobacillus plantarum</name>
    <dbReference type="NCBI Taxonomy" id="220668"/>
    <lineage>
        <taxon>Bacteria</taxon>
        <taxon>Bacillati</taxon>
        <taxon>Bacillota</taxon>
        <taxon>Bacilli</taxon>
        <taxon>Lactobacillales</taxon>
        <taxon>Lactobacillaceae</taxon>
        <taxon>Lactiplantibacillus</taxon>
    </lineage>
</organism>
<accession>P59603</accession>
<accession>F9ULZ9</accession>
<gene>
    <name evidence="1" type="primary">argG</name>
    <name type="ordered locus">lp_0775</name>
</gene>
<protein>
    <recommendedName>
        <fullName evidence="1">Argininosuccinate synthase</fullName>
        <ecNumber evidence="1">6.3.4.5</ecNumber>
    </recommendedName>
    <alternativeName>
        <fullName evidence="1">Citrulline--aspartate ligase</fullName>
    </alternativeName>
</protein>
<sequence>MVKQNDKIILAYSGGLDTSVAISWLKDKGYDVVACGIDVGEGKDMDAIKEKALKLGAVSSYMIDAKQEFAEEYALIALQGHTLYEGEYPLVSALSRPLIAKKLVTLAKQEHAVAIAHGCTGKGNDQVRFEVAIHALAPDIKIEAPVRDWHWSREEEIDYAKEHNIPVPINLDSPYSIDENLWGRANECGILEDPWQGAPADAFDRTKALADTPDTPTTLEITFEAGVPVALDGESLNLADLIIKLDQIAGEHGIGRIDHIENRLVGIKSREVYEAPAATVLLKAHKDLEDLTFERELAHFKPIIEQKLADTIYNGLWFSPLMEAMVAFLKQTQQVVNGVVRVQLFKGNVITEGRKSPNSLYDTNLATYTSADSFDQQAAVGFIKLWGLPTQVNAQVQAKAQAEAKTDKAHA</sequence>
<proteinExistence type="inferred from homology"/>
<reference key="1">
    <citation type="journal article" date="2003" name="Proc. Natl. Acad. Sci. U.S.A.">
        <title>Complete genome sequence of Lactobacillus plantarum WCFS1.</title>
        <authorList>
            <person name="Kleerebezem M."/>
            <person name="Boekhorst J."/>
            <person name="van Kranenburg R."/>
            <person name="Molenaar D."/>
            <person name="Kuipers O.P."/>
            <person name="Leer R."/>
            <person name="Tarchini R."/>
            <person name="Peters S.A."/>
            <person name="Sandbrink H.M."/>
            <person name="Fiers M.W.E.J."/>
            <person name="Stiekema W."/>
            <person name="Klein Lankhorst R.M."/>
            <person name="Bron P.A."/>
            <person name="Hoffer S.M."/>
            <person name="Nierop Groot M.N."/>
            <person name="Kerkhoven R."/>
            <person name="De Vries M."/>
            <person name="Ursing B."/>
            <person name="De Vos W.M."/>
            <person name="Siezen R.J."/>
        </authorList>
    </citation>
    <scope>NUCLEOTIDE SEQUENCE [LARGE SCALE GENOMIC DNA]</scope>
    <source>
        <strain>ATCC BAA-793 / NCIMB 8826 / WCFS1</strain>
    </source>
</reference>
<reference key="2">
    <citation type="journal article" date="2012" name="J. Bacteriol.">
        <title>Complete resequencing and reannotation of the Lactobacillus plantarum WCFS1 genome.</title>
        <authorList>
            <person name="Siezen R.J."/>
            <person name="Francke C."/>
            <person name="Renckens B."/>
            <person name="Boekhorst J."/>
            <person name="Wels M."/>
            <person name="Kleerebezem M."/>
            <person name="van Hijum S.A."/>
        </authorList>
    </citation>
    <scope>NUCLEOTIDE SEQUENCE [LARGE SCALE GENOMIC DNA]</scope>
    <scope>GENOME REANNOTATION</scope>
    <source>
        <strain>ATCC BAA-793 / NCIMB 8826 / WCFS1</strain>
    </source>
</reference>
<evidence type="ECO:0000255" key="1">
    <source>
        <dbReference type="HAMAP-Rule" id="MF_00005"/>
    </source>
</evidence>
<name>ASSY_LACPL</name>
<feature type="chain" id="PRO_0000148602" description="Argininosuccinate synthase">
    <location>
        <begin position="1"/>
        <end position="411"/>
    </location>
</feature>
<feature type="binding site" evidence="1">
    <location>
        <begin position="11"/>
        <end position="19"/>
    </location>
    <ligand>
        <name>ATP</name>
        <dbReference type="ChEBI" id="CHEBI:30616"/>
    </ligand>
</feature>
<feature type="binding site" evidence="1">
    <location>
        <position position="88"/>
    </location>
    <ligand>
        <name>L-citrulline</name>
        <dbReference type="ChEBI" id="CHEBI:57743"/>
    </ligand>
</feature>
<feature type="binding site" evidence="1">
    <location>
        <position position="118"/>
    </location>
    <ligand>
        <name>ATP</name>
        <dbReference type="ChEBI" id="CHEBI:30616"/>
    </ligand>
</feature>
<feature type="binding site" evidence="1">
    <location>
        <position position="120"/>
    </location>
    <ligand>
        <name>L-aspartate</name>
        <dbReference type="ChEBI" id="CHEBI:29991"/>
    </ligand>
</feature>
<feature type="binding site" evidence="1">
    <location>
        <position position="124"/>
    </location>
    <ligand>
        <name>L-aspartate</name>
        <dbReference type="ChEBI" id="CHEBI:29991"/>
    </ligand>
</feature>
<feature type="binding site" evidence="1">
    <location>
        <position position="124"/>
    </location>
    <ligand>
        <name>L-citrulline</name>
        <dbReference type="ChEBI" id="CHEBI:57743"/>
    </ligand>
</feature>
<feature type="binding site" evidence="1">
    <location>
        <position position="125"/>
    </location>
    <ligand>
        <name>L-aspartate</name>
        <dbReference type="ChEBI" id="CHEBI:29991"/>
    </ligand>
</feature>
<feature type="binding site" evidence="1">
    <location>
        <position position="128"/>
    </location>
    <ligand>
        <name>L-citrulline</name>
        <dbReference type="ChEBI" id="CHEBI:57743"/>
    </ligand>
</feature>
<feature type="binding site" evidence="1">
    <location>
        <position position="176"/>
    </location>
    <ligand>
        <name>L-citrulline</name>
        <dbReference type="ChEBI" id="CHEBI:57743"/>
    </ligand>
</feature>
<feature type="binding site" evidence="1">
    <location>
        <position position="261"/>
    </location>
    <ligand>
        <name>L-citrulline</name>
        <dbReference type="ChEBI" id="CHEBI:57743"/>
    </ligand>
</feature>
<feature type="binding site" evidence="1">
    <location>
        <position position="273"/>
    </location>
    <ligand>
        <name>L-citrulline</name>
        <dbReference type="ChEBI" id="CHEBI:57743"/>
    </ligand>
</feature>